<evidence type="ECO:0000255" key="1">
    <source>
        <dbReference type="PROSITE-ProRule" id="PRU00172"/>
    </source>
</evidence>
<evidence type="ECO:0000256" key="2">
    <source>
        <dbReference type="SAM" id="MobiDB-lite"/>
    </source>
</evidence>
<evidence type="ECO:0000269" key="3">
    <source>
    </source>
</evidence>
<accession>Q12128</accession>
<accession>D6W2J2</accession>
<reference key="1">
    <citation type="journal article" date="1996" name="Yeast">
        <title>Sequencing and analysis of 51 kb on the right arm of chromosome XV from Saccharomyces cerevisiae reveals 30 open reading frames.</title>
        <authorList>
            <person name="Wiemann S."/>
            <person name="Rechmann S."/>
            <person name="Benes V."/>
            <person name="Voss H."/>
            <person name="Schwager C."/>
            <person name="Vlcek C."/>
            <person name="Stegemann J."/>
            <person name="Zimmermann J."/>
            <person name="Erfle H."/>
            <person name="Paces V."/>
            <person name="Ansorge W."/>
        </authorList>
    </citation>
    <scope>NUCLEOTIDE SEQUENCE [GENOMIC DNA]</scope>
    <source>
        <strain>ATCC 96604 / S288c / FY1679</strain>
    </source>
</reference>
<reference key="2">
    <citation type="journal article" date="1997" name="Yeast">
        <title>DNA sequencing and analysis of 130 kb from yeast chromosome XV.</title>
        <authorList>
            <person name="Voss H."/>
            <person name="Benes V."/>
            <person name="Andrade M.A."/>
            <person name="Valencia A."/>
            <person name="Rechmann S."/>
            <person name="Teodoru C."/>
            <person name="Schwager C."/>
            <person name="Paces V."/>
            <person name="Sander C."/>
            <person name="Ansorge W."/>
        </authorList>
    </citation>
    <scope>NUCLEOTIDE SEQUENCE [GENOMIC DNA]</scope>
</reference>
<reference key="3">
    <citation type="journal article" date="1997" name="Nature">
        <title>The nucleotide sequence of Saccharomyces cerevisiae chromosome XV.</title>
        <authorList>
            <person name="Dujon B."/>
            <person name="Albermann K."/>
            <person name="Aldea M."/>
            <person name="Alexandraki D."/>
            <person name="Ansorge W."/>
            <person name="Arino J."/>
            <person name="Benes V."/>
            <person name="Bohn C."/>
            <person name="Bolotin-Fukuhara M."/>
            <person name="Bordonne R."/>
            <person name="Boyer J."/>
            <person name="Camasses A."/>
            <person name="Casamayor A."/>
            <person name="Casas C."/>
            <person name="Cheret G."/>
            <person name="Cziepluch C."/>
            <person name="Daignan-Fornier B."/>
            <person name="Dang V.-D."/>
            <person name="de Haan M."/>
            <person name="Delius H."/>
            <person name="Durand P."/>
            <person name="Fairhead C."/>
            <person name="Feldmann H."/>
            <person name="Gaillon L."/>
            <person name="Galisson F."/>
            <person name="Gamo F.-J."/>
            <person name="Gancedo C."/>
            <person name="Goffeau A."/>
            <person name="Goulding S.E."/>
            <person name="Grivell L.A."/>
            <person name="Habbig B."/>
            <person name="Hand N.J."/>
            <person name="Hani J."/>
            <person name="Hattenhorst U."/>
            <person name="Hebling U."/>
            <person name="Hernando Y."/>
            <person name="Herrero E."/>
            <person name="Heumann K."/>
            <person name="Hiesel R."/>
            <person name="Hilger F."/>
            <person name="Hofmann B."/>
            <person name="Hollenberg C.P."/>
            <person name="Hughes B."/>
            <person name="Jauniaux J.-C."/>
            <person name="Kalogeropoulos A."/>
            <person name="Katsoulou C."/>
            <person name="Kordes E."/>
            <person name="Lafuente M.J."/>
            <person name="Landt O."/>
            <person name="Louis E.J."/>
            <person name="Maarse A.C."/>
            <person name="Madania A."/>
            <person name="Mannhaupt G."/>
            <person name="Marck C."/>
            <person name="Martin R.P."/>
            <person name="Mewes H.-W."/>
            <person name="Michaux G."/>
            <person name="Paces V."/>
            <person name="Parle-McDermott A.G."/>
            <person name="Pearson B.M."/>
            <person name="Perrin A."/>
            <person name="Pettersson B."/>
            <person name="Poch O."/>
            <person name="Pohl T.M."/>
            <person name="Poirey R."/>
            <person name="Portetelle D."/>
            <person name="Pujol A."/>
            <person name="Purnelle B."/>
            <person name="Ramezani Rad M."/>
            <person name="Rechmann S."/>
            <person name="Schwager C."/>
            <person name="Schweizer M."/>
            <person name="Sor F."/>
            <person name="Sterky F."/>
            <person name="Tarassov I.A."/>
            <person name="Teodoru C."/>
            <person name="Tettelin H."/>
            <person name="Thierry A."/>
            <person name="Tobiasch E."/>
            <person name="Tzermia M."/>
            <person name="Uhlen M."/>
            <person name="Unseld M."/>
            <person name="Valens M."/>
            <person name="Vandenbol M."/>
            <person name="Vetter I."/>
            <person name="Vlcek C."/>
            <person name="Voet M."/>
            <person name="Volckaert G."/>
            <person name="Voss H."/>
            <person name="Wambutt R."/>
            <person name="Wedler H."/>
            <person name="Wiemann S."/>
            <person name="Winsor B."/>
            <person name="Wolfe K.H."/>
            <person name="Zollner A."/>
            <person name="Zumstein E."/>
            <person name="Kleine K."/>
        </authorList>
    </citation>
    <scope>NUCLEOTIDE SEQUENCE [LARGE SCALE GENOMIC DNA]</scope>
    <source>
        <strain>ATCC 204508 / S288c</strain>
    </source>
</reference>
<reference key="4">
    <citation type="journal article" date="2014" name="G3 (Bethesda)">
        <title>The reference genome sequence of Saccharomyces cerevisiae: Then and now.</title>
        <authorList>
            <person name="Engel S.R."/>
            <person name="Dietrich F.S."/>
            <person name="Fisk D.G."/>
            <person name="Binkley G."/>
            <person name="Balakrishnan R."/>
            <person name="Costanzo M.C."/>
            <person name="Dwight S.S."/>
            <person name="Hitz B.C."/>
            <person name="Karra K."/>
            <person name="Nash R.S."/>
            <person name="Weng S."/>
            <person name="Wong E.D."/>
            <person name="Lloyd P."/>
            <person name="Skrzypek M.S."/>
            <person name="Miyasato S.R."/>
            <person name="Simison M."/>
            <person name="Cherry J.M."/>
        </authorList>
    </citation>
    <scope>GENOME REANNOTATION</scope>
    <source>
        <strain>ATCC 204508 / S288c</strain>
    </source>
</reference>
<reference key="5">
    <citation type="journal article" date="2001" name="FEBS Lett.">
        <title>Functional characterization of the Bag7, Lrg1 and Rgd2 RhoGAP proteins from Saccharomyces cerevisiae.</title>
        <authorList>
            <person name="Roumanie O."/>
            <person name="Weinachter C."/>
            <person name="Larrieu I."/>
            <person name="Crouzet M."/>
            <person name="Doignon F."/>
        </authorList>
    </citation>
    <scope>FUNCTION</scope>
    <scope>INTERACTION WITH RHO1</scope>
</reference>
<name>BAG7_YEAST</name>
<sequence>MFNMNLLSTPSSEEGSPQNRSSSMSSVEGKKDRDTFTNLQNEFDGKVFGVSLEESLKVAQEEVIIQKSTNEIGSIPVVIAKSGKYLKENALDTTGIFRIAGSNKRVRELQAVFSKPPDYGRKFEGWCDFNVHDIATLLKRYLNSLSEPLVPLALYDIFRNPILENPKINEHKEQIIKDYEDIYMLLPQQNRHLILYLAALLNLFARNEKKNLMSASNLAAIVQPSLLSHPKDEMCPKEYEASRTVIEFLILHASDIIPNTEKANKDTMPHAGTVAKFNNITVPEMAIDSDEEDFVHPSIDDHMLPRSRALSDSNNFTIHHHHHHHHALFPSPIDFDNNGLSVPRSFKGRTLSAESLSPRLSKLLGNVGNSSNTGIKDPTERVPRGEHKTKHKQRQSWLRRLTSPSRTQP</sequence>
<comment type="function">
    <text evidence="3">Acts in signal transduction. Activates RHO1.</text>
</comment>
<comment type="subunit">
    <text evidence="3">Interacts with RHO1.</text>
</comment>
<proteinExistence type="evidence at protein level"/>
<keyword id="KW-0343">GTPase activation</keyword>
<keyword id="KW-1185">Reference proteome</keyword>
<gene>
    <name type="primary">BAG7</name>
    <name type="ordered locus">YOR134W</name>
    <name type="ORF">O3320</name>
    <name type="ORF">YOR3320W</name>
</gene>
<organism>
    <name type="scientific">Saccharomyces cerevisiae (strain ATCC 204508 / S288c)</name>
    <name type="common">Baker's yeast</name>
    <dbReference type="NCBI Taxonomy" id="559292"/>
    <lineage>
        <taxon>Eukaryota</taxon>
        <taxon>Fungi</taxon>
        <taxon>Dikarya</taxon>
        <taxon>Ascomycota</taxon>
        <taxon>Saccharomycotina</taxon>
        <taxon>Saccharomycetes</taxon>
        <taxon>Saccharomycetales</taxon>
        <taxon>Saccharomycetaceae</taxon>
        <taxon>Saccharomyces</taxon>
    </lineage>
</organism>
<protein>
    <recommendedName>
        <fullName>Rho-GTPase-activating protein BAG7</fullName>
    </recommendedName>
</protein>
<feature type="chain" id="PRO_0000064810" description="Rho-GTPase-activating protein BAG7">
    <location>
        <begin position="1"/>
        <end position="409"/>
    </location>
</feature>
<feature type="domain" description="Rho-GAP" evidence="1">
    <location>
        <begin position="50"/>
        <end position="257"/>
    </location>
</feature>
<feature type="region of interest" description="Disordered" evidence="2">
    <location>
        <begin position="1"/>
        <end position="32"/>
    </location>
</feature>
<feature type="region of interest" description="Disordered" evidence="2">
    <location>
        <begin position="362"/>
        <end position="409"/>
    </location>
</feature>
<feature type="compositionally biased region" description="Polar residues" evidence="2">
    <location>
        <begin position="1"/>
        <end position="26"/>
    </location>
</feature>
<feature type="compositionally biased region" description="Basic and acidic residues" evidence="2">
    <location>
        <begin position="377"/>
        <end position="386"/>
    </location>
</feature>
<feature type="site" description="Arginine finger; crucial for GTP hydrolysis by stabilizing the transition state" evidence="1">
    <location>
        <position position="98"/>
    </location>
</feature>
<dbReference type="EMBL" id="X94335">
    <property type="protein sequence ID" value="CAA64053.1"/>
    <property type="molecule type" value="Genomic_DNA"/>
</dbReference>
<dbReference type="EMBL" id="X90518">
    <property type="protein sequence ID" value="CAA62109.1"/>
    <property type="molecule type" value="Genomic_DNA"/>
</dbReference>
<dbReference type="EMBL" id="Z75042">
    <property type="protein sequence ID" value="CAA99333.1"/>
    <property type="molecule type" value="Genomic_DNA"/>
</dbReference>
<dbReference type="EMBL" id="BK006948">
    <property type="protein sequence ID" value="DAA10908.1"/>
    <property type="molecule type" value="Genomic_DNA"/>
</dbReference>
<dbReference type="PIR" id="S60988">
    <property type="entry name" value="S60988"/>
</dbReference>
<dbReference type="RefSeq" id="NP_014777.3">
    <property type="nucleotide sequence ID" value="NM_001183553.3"/>
</dbReference>
<dbReference type="SMR" id="Q12128"/>
<dbReference type="BioGRID" id="34530">
    <property type="interactions" value="57"/>
</dbReference>
<dbReference type="DIP" id="DIP-5208N"/>
<dbReference type="FunCoup" id="Q12128">
    <property type="interactions" value="85"/>
</dbReference>
<dbReference type="IntAct" id="Q12128">
    <property type="interactions" value="1"/>
</dbReference>
<dbReference type="STRING" id="4932.YOR134W"/>
<dbReference type="iPTMnet" id="Q12128"/>
<dbReference type="PaxDb" id="4932-YOR134W"/>
<dbReference type="PeptideAtlas" id="Q12128"/>
<dbReference type="EnsemblFungi" id="YOR134W_mRNA">
    <property type="protein sequence ID" value="YOR134W"/>
    <property type="gene ID" value="YOR134W"/>
</dbReference>
<dbReference type="GeneID" id="854302"/>
<dbReference type="KEGG" id="sce:YOR134W"/>
<dbReference type="AGR" id="SGD:S000005660"/>
<dbReference type="SGD" id="S000005660">
    <property type="gene designation" value="BAG7"/>
</dbReference>
<dbReference type="VEuPathDB" id="FungiDB:YOR134W"/>
<dbReference type="eggNOG" id="KOG2710">
    <property type="taxonomic scope" value="Eukaryota"/>
</dbReference>
<dbReference type="GeneTree" id="ENSGT00950000183110"/>
<dbReference type="HOGENOM" id="CLU_678279_0_0_1"/>
<dbReference type="InParanoid" id="Q12128"/>
<dbReference type="OMA" id="PEMAIDS"/>
<dbReference type="OrthoDB" id="3196451at2759"/>
<dbReference type="BioCyc" id="YEAST:G3O-33658-MONOMER"/>
<dbReference type="Reactome" id="R-SCE-8980692">
    <property type="pathway name" value="RHOA GTPase cycle"/>
</dbReference>
<dbReference type="Reactome" id="R-SCE-9013148">
    <property type="pathway name" value="CDC42 GTPase cycle"/>
</dbReference>
<dbReference type="BioGRID-ORCS" id="854302">
    <property type="hits" value="0 hits in 10 CRISPR screens"/>
</dbReference>
<dbReference type="PRO" id="PR:Q12128"/>
<dbReference type="Proteomes" id="UP000002311">
    <property type="component" value="Chromosome XV"/>
</dbReference>
<dbReference type="RNAct" id="Q12128">
    <property type="molecule type" value="protein"/>
</dbReference>
<dbReference type="GO" id="GO:0005938">
    <property type="term" value="C:cell cortex"/>
    <property type="evidence" value="ECO:0000318"/>
    <property type="project" value="GO_Central"/>
</dbReference>
<dbReference type="GO" id="GO:0005096">
    <property type="term" value="F:GTPase activator activity"/>
    <property type="evidence" value="ECO:0000314"/>
    <property type="project" value="SGD"/>
</dbReference>
<dbReference type="GO" id="GO:0035024">
    <property type="term" value="P:negative regulation of Rho protein signal transduction"/>
    <property type="evidence" value="ECO:0000316"/>
    <property type="project" value="SGD"/>
</dbReference>
<dbReference type="GO" id="GO:0060237">
    <property type="term" value="P:regulation of fungal-type cell wall organization"/>
    <property type="evidence" value="ECO:0000318"/>
    <property type="project" value="GO_Central"/>
</dbReference>
<dbReference type="GO" id="GO:0007165">
    <property type="term" value="P:signal transduction"/>
    <property type="evidence" value="ECO:0007669"/>
    <property type="project" value="InterPro"/>
</dbReference>
<dbReference type="CDD" id="cd04396">
    <property type="entry name" value="RhoGAP_fSAC7_BAG7"/>
    <property type="match status" value="1"/>
</dbReference>
<dbReference type="FunFam" id="1.10.555.10:FF:000050">
    <property type="entry name" value="GTPase-activating protein"/>
    <property type="match status" value="1"/>
</dbReference>
<dbReference type="Gene3D" id="1.10.555.10">
    <property type="entry name" value="Rho GTPase activation protein"/>
    <property type="match status" value="1"/>
</dbReference>
<dbReference type="InterPro" id="IPR008936">
    <property type="entry name" value="Rho_GTPase_activation_prot"/>
</dbReference>
<dbReference type="InterPro" id="IPR051025">
    <property type="entry name" value="RhoGAP"/>
</dbReference>
<dbReference type="InterPro" id="IPR000198">
    <property type="entry name" value="RhoGAP_dom"/>
</dbReference>
<dbReference type="PANTHER" id="PTHR15228:SF25">
    <property type="entry name" value="F-BAR DOMAIN-CONTAINING PROTEIN"/>
    <property type="match status" value="1"/>
</dbReference>
<dbReference type="PANTHER" id="PTHR15228">
    <property type="entry name" value="SPERMATHECAL PHYSIOLOGY VARIANT"/>
    <property type="match status" value="1"/>
</dbReference>
<dbReference type="Pfam" id="PF00620">
    <property type="entry name" value="RhoGAP"/>
    <property type="match status" value="1"/>
</dbReference>
<dbReference type="SMART" id="SM00324">
    <property type="entry name" value="RhoGAP"/>
    <property type="match status" value="1"/>
</dbReference>
<dbReference type="SUPFAM" id="SSF48350">
    <property type="entry name" value="GTPase activation domain, GAP"/>
    <property type="match status" value="1"/>
</dbReference>
<dbReference type="PROSITE" id="PS50238">
    <property type="entry name" value="RHOGAP"/>
    <property type="match status" value="1"/>
</dbReference>